<name>RS7_UREU1</name>
<protein>
    <recommendedName>
        <fullName evidence="1">Small ribosomal subunit protein uS7</fullName>
    </recommendedName>
    <alternativeName>
        <fullName evidence="2">30S ribosomal protein S7</fullName>
    </alternativeName>
</protein>
<gene>
    <name evidence="1" type="primary">rpsG</name>
    <name type="ordered locus">UUR10_0613</name>
</gene>
<keyword id="KW-0687">Ribonucleoprotein</keyword>
<keyword id="KW-0689">Ribosomal protein</keyword>
<keyword id="KW-0694">RNA-binding</keyword>
<keyword id="KW-0699">rRNA-binding</keyword>
<keyword id="KW-0820">tRNA-binding</keyword>
<comment type="function">
    <text evidence="1">One of the primary rRNA binding proteins, it binds directly to 16S rRNA where it nucleates assembly of the head domain of the 30S subunit. Is located at the subunit interface close to the decoding center, probably blocks exit of the E-site tRNA.</text>
</comment>
<comment type="subunit">
    <text evidence="1">Part of the 30S ribosomal subunit. Contacts proteins S9 and S11.</text>
</comment>
<comment type="similarity">
    <text evidence="1">Belongs to the universal ribosomal protein uS7 family.</text>
</comment>
<feature type="chain" id="PRO_1000126022" description="Small ribosomal subunit protein uS7">
    <location>
        <begin position="1"/>
        <end position="155"/>
    </location>
</feature>
<proteinExistence type="inferred from homology"/>
<organism>
    <name type="scientific">Ureaplasma urealyticum serovar 10 (strain ATCC 33699 / Western)</name>
    <dbReference type="NCBI Taxonomy" id="565575"/>
    <lineage>
        <taxon>Bacteria</taxon>
        <taxon>Bacillati</taxon>
        <taxon>Mycoplasmatota</taxon>
        <taxon>Mycoplasmoidales</taxon>
        <taxon>Mycoplasmoidaceae</taxon>
        <taxon>Ureaplasma</taxon>
    </lineage>
</organism>
<sequence length="155" mass="17745">MRKLKPQKRQVLADPVYNSRLVTKLINAIMYDGKKGLAQSIIYSAFEIVEQKTGKPALEVFNKAIDNVMPIIELKVRRVGGSNFQVPTEVTPERRQTLGLRWITLYARLRHEHTMIEKLAHEIIDASNNVGAAIKKKEDTHKMAEANKAFAHLRW</sequence>
<evidence type="ECO:0000255" key="1">
    <source>
        <dbReference type="HAMAP-Rule" id="MF_00480"/>
    </source>
</evidence>
<evidence type="ECO:0000305" key="2"/>
<accession>B5ZC33</accession>
<reference key="1">
    <citation type="submission" date="2008-10" db="EMBL/GenBank/DDBJ databases">
        <title>Genome sequence of Ureaplasma urealyticum serovar 10 ATCC-33699.</title>
        <authorList>
            <person name="Shrivastava S."/>
            <person name="Methe B.A."/>
            <person name="Glass J."/>
            <person name="White K."/>
            <person name="Duffy L.B."/>
        </authorList>
    </citation>
    <scope>NUCLEOTIDE SEQUENCE [LARGE SCALE GENOMIC DNA]</scope>
    <source>
        <strain>ATCC 33699 / Western</strain>
    </source>
</reference>
<dbReference type="EMBL" id="CP001184">
    <property type="protein sequence ID" value="ACI60074.1"/>
    <property type="molecule type" value="Genomic_DNA"/>
</dbReference>
<dbReference type="RefSeq" id="WP_004026103.1">
    <property type="nucleotide sequence ID" value="NC_011374.1"/>
</dbReference>
<dbReference type="SMR" id="B5ZC33"/>
<dbReference type="STRING" id="565575.UUR10_0613"/>
<dbReference type="GeneID" id="93849073"/>
<dbReference type="KEGG" id="uue:UUR10_0613"/>
<dbReference type="eggNOG" id="COG0049">
    <property type="taxonomic scope" value="Bacteria"/>
</dbReference>
<dbReference type="HOGENOM" id="CLU_072226_1_1_14"/>
<dbReference type="OrthoDB" id="9807653at2"/>
<dbReference type="Proteomes" id="UP000002018">
    <property type="component" value="Chromosome"/>
</dbReference>
<dbReference type="GO" id="GO:0015935">
    <property type="term" value="C:small ribosomal subunit"/>
    <property type="evidence" value="ECO:0007669"/>
    <property type="project" value="InterPro"/>
</dbReference>
<dbReference type="GO" id="GO:0019843">
    <property type="term" value="F:rRNA binding"/>
    <property type="evidence" value="ECO:0007669"/>
    <property type="project" value="UniProtKB-UniRule"/>
</dbReference>
<dbReference type="GO" id="GO:0003735">
    <property type="term" value="F:structural constituent of ribosome"/>
    <property type="evidence" value="ECO:0007669"/>
    <property type="project" value="InterPro"/>
</dbReference>
<dbReference type="GO" id="GO:0000049">
    <property type="term" value="F:tRNA binding"/>
    <property type="evidence" value="ECO:0007669"/>
    <property type="project" value="UniProtKB-UniRule"/>
</dbReference>
<dbReference type="GO" id="GO:0006412">
    <property type="term" value="P:translation"/>
    <property type="evidence" value="ECO:0007669"/>
    <property type="project" value="UniProtKB-UniRule"/>
</dbReference>
<dbReference type="CDD" id="cd14869">
    <property type="entry name" value="uS7_Bacteria"/>
    <property type="match status" value="1"/>
</dbReference>
<dbReference type="FunFam" id="1.10.455.10:FF:000001">
    <property type="entry name" value="30S ribosomal protein S7"/>
    <property type="match status" value="1"/>
</dbReference>
<dbReference type="Gene3D" id="1.10.455.10">
    <property type="entry name" value="Ribosomal protein S7 domain"/>
    <property type="match status" value="1"/>
</dbReference>
<dbReference type="HAMAP" id="MF_00480_B">
    <property type="entry name" value="Ribosomal_uS7_B"/>
    <property type="match status" value="1"/>
</dbReference>
<dbReference type="InterPro" id="IPR000235">
    <property type="entry name" value="Ribosomal_uS7"/>
</dbReference>
<dbReference type="InterPro" id="IPR005717">
    <property type="entry name" value="Ribosomal_uS7_bac/org-type"/>
</dbReference>
<dbReference type="InterPro" id="IPR020606">
    <property type="entry name" value="Ribosomal_uS7_CS"/>
</dbReference>
<dbReference type="InterPro" id="IPR023798">
    <property type="entry name" value="Ribosomal_uS7_dom"/>
</dbReference>
<dbReference type="InterPro" id="IPR036823">
    <property type="entry name" value="Ribosomal_uS7_dom_sf"/>
</dbReference>
<dbReference type="NCBIfam" id="TIGR01029">
    <property type="entry name" value="rpsG_bact"/>
    <property type="match status" value="1"/>
</dbReference>
<dbReference type="PANTHER" id="PTHR11205">
    <property type="entry name" value="RIBOSOMAL PROTEIN S7"/>
    <property type="match status" value="1"/>
</dbReference>
<dbReference type="Pfam" id="PF00177">
    <property type="entry name" value="Ribosomal_S7"/>
    <property type="match status" value="1"/>
</dbReference>
<dbReference type="PIRSF" id="PIRSF002122">
    <property type="entry name" value="RPS7p_RPS7a_RPS5e_RPS7o"/>
    <property type="match status" value="1"/>
</dbReference>
<dbReference type="SUPFAM" id="SSF47973">
    <property type="entry name" value="Ribosomal protein S7"/>
    <property type="match status" value="1"/>
</dbReference>
<dbReference type="PROSITE" id="PS00052">
    <property type="entry name" value="RIBOSOMAL_S7"/>
    <property type="match status" value="1"/>
</dbReference>